<name>MURG_STUS1</name>
<feature type="chain" id="PRO_1000002681" description="UDP-N-acetylglucosamine--N-acetylmuramyl-(pentapeptide) pyrophosphoryl-undecaprenol N-acetylglucosamine transferase">
    <location>
        <begin position="1"/>
        <end position="356"/>
    </location>
</feature>
<feature type="binding site" evidence="1">
    <location>
        <begin position="12"/>
        <end position="14"/>
    </location>
    <ligand>
        <name>UDP-N-acetyl-alpha-D-glucosamine</name>
        <dbReference type="ChEBI" id="CHEBI:57705"/>
    </ligand>
</feature>
<feature type="binding site" evidence="1">
    <location>
        <position position="124"/>
    </location>
    <ligand>
        <name>UDP-N-acetyl-alpha-D-glucosamine</name>
        <dbReference type="ChEBI" id="CHEBI:57705"/>
    </ligand>
</feature>
<feature type="binding site" evidence="1">
    <location>
        <position position="163"/>
    </location>
    <ligand>
        <name>UDP-N-acetyl-alpha-D-glucosamine</name>
        <dbReference type="ChEBI" id="CHEBI:57705"/>
    </ligand>
</feature>
<feature type="binding site" evidence="1">
    <location>
        <position position="188"/>
    </location>
    <ligand>
        <name>UDP-N-acetyl-alpha-D-glucosamine</name>
        <dbReference type="ChEBI" id="CHEBI:57705"/>
    </ligand>
</feature>
<feature type="binding site" evidence="1">
    <location>
        <position position="242"/>
    </location>
    <ligand>
        <name>UDP-N-acetyl-alpha-D-glucosamine</name>
        <dbReference type="ChEBI" id="CHEBI:57705"/>
    </ligand>
</feature>
<feature type="binding site" evidence="1">
    <location>
        <begin position="261"/>
        <end position="266"/>
    </location>
    <ligand>
        <name>UDP-N-acetyl-alpha-D-glucosamine</name>
        <dbReference type="ChEBI" id="CHEBI:57705"/>
    </ligand>
</feature>
<feature type="binding site" evidence="1">
    <location>
        <position position="287"/>
    </location>
    <ligand>
        <name>UDP-N-acetyl-alpha-D-glucosamine</name>
        <dbReference type="ChEBI" id="CHEBI:57705"/>
    </ligand>
</feature>
<evidence type="ECO:0000255" key="1">
    <source>
        <dbReference type="HAMAP-Rule" id="MF_00033"/>
    </source>
</evidence>
<keyword id="KW-0131">Cell cycle</keyword>
<keyword id="KW-0132">Cell division</keyword>
<keyword id="KW-0997">Cell inner membrane</keyword>
<keyword id="KW-1003">Cell membrane</keyword>
<keyword id="KW-0133">Cell shape</keyword>
<keyword id="KW-0961">Cell wall biogenesis/degradation</keyword>
<keyword id="KW-0328">Glycosyltransferase</keyword>
<keyword id="KW-0472">Membrane</keyword>
<keyword id="KW-0573">Peptidoglycan synthesis</keyword>
<keyword id="KW-1185">Reference proteome</keyword>
<keyword id="KW-0808">Transferase</keyword>
<dbReference type="EC" id="2.4.1.227" evidence="1"/>
<dbReference type="EMBL" id="CP000304">
    <property type="protein sequence ID" value="ABP78779.1"/>
    <property type="molecule type" value="Genomic_DNA"/>
</dbReference>
<dbReference type="RefSeq" id="WP_011912269.1">
    <property type="nucleotide sequence ID" value="NC_009434.1"/>
</dbReference>
<dbReference type="SMR" id="A4VIH8"/>
<dbReference type="CAZy" id="GT28">
    <property type="family name" value="Glycosyltransferase Family 28"/>
</dbReference>
<dbReference type="KEGG" id="psa:PST_1082"/>
<dbReference type="eggNOG" id="COG0707">
    <property type="taxonomic scope" value="Bacteria"/>
</dbReference>
<dbReference type="HOGENOM" id="CLU_037404_2_0_6"/>
<dbReference type="UniPathway" id="UPA00219"/>
<dbReference type="Proteomes" id="UP000000233">
    <property type="component" value="Chromosome"/>
</dbReference>
<dbReference type="GO" id="GO:0005886">
    <property type="term" value="C:plasma membrane"/>
    <property type="evidence" value="ECO:0007669"/>
    <property type="project" value="UniProtKB-SubCell"/>
</dbReference>
<dbReference type="GO" id="GO:0051991">
    <property type="term" value="F:UDP-N-acetyl-D-glucosamine:N-acetylmuramoyl-L-alanyl-D-glutamyl-meso-2,6-diaminopimelyl-D-alanyl-D-alanine-diphosphoundecaprenol 4-beta-N-acetylglucosaminlytransferase activity"/>
    <property type="evidence" value="ECO:0007669"/>
    <property type="project" value="RHEA"/>
</dbReference>
<dbReference type="GO" id="GO:0050511">
    <property type="term" value="F:undecaprenyldiphospho-muramoylpentapeptide beta-N-acetylglucosaminyltransferase activity"/>
    <property type="evidence" value="ECO:0007669"/>
    <property type="project" value="UniProtKB-UniRule"/>
</dbReference>
<dbReference type="GO" id="GO:0005975">
    <property type="term" value="P:carbohydrate metabolic process"/>
    <property type="evidence" value="ECO:0007669"/>
    <property type="project" value="InterPro"/>
</dbReference>
<dbReference type="GO" id="GO:0051301">
    <property type="term" value="P:cell division"/>
    <property type="evidence" value="ECO:0007669"/>
    <property type="project" value="UniProtKB-KW"/>
</dbReference>
<dbReference type="GO" id="GO:0071555">
    <property type="term" value="P:cell wall organization"/>
    <property type="evidence" value="ECO:0007669"/>
    <property type="project" value="UniProtKB-KW"/>
</dbReference>
<dbReference type="GO" id="GO:0030259">
    <property type="term" value="P:lipid glycosylation"/>
    <property type="evidence" value="ECO:0007669"/>
    <property type="project" value="UniProtKB-UniRule"/>
</dbReference>
<dbReference type="GO" id="GO:0009252">
    <property type="term" value="P:peptidoglycan biosynthetic process"/>
    <property type="evidence" value="ECO:0007669"/>
    <property type="project" value="UniProtKB-UniRule"/>
</dbReference>
<dbReference type="GO" id="GO:0008360">
    <property type="term" value="P:regulation of cell shape"/>
    <property type="evidence" value="ECO:0007669"/>
    <property type="project" value="UniProtKB-KW"/>
</dbReference>
<dbReference type="CDD" id="cd03785">
    <property type="entry name" value="GT28_MurG"/>
    <property type="match status" value="1"/>
</dbReference>
<dbReference type="Gene3D" id="3.40.50.2000">
    <property type="entry name" value="Glycogen Phosphorylase B"/>
    <property type="match status" value="2"/>
</dbReference>
<dbReference type="HAMAP" id="MF_00033">
    <property type="entry name" value="MurG"/>
    <property type="match status" value="1"/>
</dbReference>
<dbReference type="InterPro" id="IPR006009">
    <property type="entry name" value="GlcNAc_MurG"/>
</dbReference>
<dbReference type="InterPro" id="IPR007235">
    <property type="entry name" value="Glyco_trans_28_C"/>
</dbReference>
<dbReference type="InterPro" id="IPR004276">
    <property type="entry name" value="GlycoTrans_28_N"/>
</dbReference>
<dbReference type="NCBIfam" id="TIGR01133">
    <property type="entry name" value="murG"/>
    <property type="match status" value="1"/>
</dbReference>
<dbReference type="PANTHER" id="PTHR21015:SF22">
    <property type="entry name" value="GLYCOSYLTRANSFERASE"/>
    <property type="match status" value="1"/>
</dbReference>
<dbReference type="PANTHER" id="PTHR21015">
    <property type="entry name" value="UDP-N-ACETYLGLUCOSAMINE--N-ACETYLMURAMYL-(PENTAPEPTIDE) PYROPHOSPHORYL-UNDECAPRENOL N-ACETYLGLUCOSAMINE TRANSFERASE 1"/>
    <property type="match status" value="1"/>
</dbReference>
<dbReference type="Pfam" id="PF04101">
    <property type="entry name" value="Glyco_tran_28_C"/>
    <property type="match status" value="1"/>
</dbReference>
<dbReference type="Pfam" id="PF03033">
    <property type="entry name" value="Glyco_transf_28"/>
    <property type="match status" value="1"/>
</dbReference>
<dbReference type="SUPFAM" id="SSF53756">
    <property type="entry name" value="UDP-Glycosyltransferase/glycogen phosphorylase"/>
    <property type="match status" value="1"/>
</dbReference>
<accession>A4VIH8</accession>
<protein>
    <recommendedName>
        <fullName evidence="1">UDP-N-acetylglucosamine--N-acetylmuramyl-(pentapeptide) pyrophosphoryl-undecaprenol N-acetylglucosamine transferase</fullName>
        <ecNumber evidence="1">2.4.1.227</ecNumber>
    </recommendedName>
    <alternativeName>
        <fullName evidence="1">Undecaprenyl-PP-MurNAc-pentapeptide-UDPGlcNAc GlcNAc transferase</fullName>
    </alternativeName>
</protein>
<organism>
    <name type="scientific">Stutzerimonas stutzeri (strain A1501)</name>
    <name type="common">Pseudomonas stutzeri</name>
    <dbReference type="NCBI Taxonomy" id="379731"/>
    <lineage>
        <taxon>Bacteria</taxon>
        <taxon>Pseudomonadati</taxon>
        <taxon>Pseudomonadota</taxon>
        <taxon>Gammaproteobacteria</taxon>
        <taxon>Pseudomonadales</taxon>
        <taxon>Pseudomonadaceae</taxon>
        <taxon>Stutzerimonas</taxon>
    </lineage>
</organism>
<reference key="1">
    <citation type="journal article" date="2008" name="Proc. Natl. Acad. Sci. U.S.A.">
        <title>Nitrogen fixation island and rhizosphere competence traits in the genome of root-associated Pseudomonas stutzeri A1501.</title>
        <authorList>
            <person name="Yan Y."/>
            <person name="Yang J."/>
            <person name="Dou Y."/>
            <person name="Chen M."/>
            <person name="Ping S."/>
            <person name="Peng J."/>
            <person name="Lu W."/>
            <person name="Zhang W."/>
            <person name="Yao Z."/>
            <person name="Li H."/>
            <person name="Liu W."/>
            <person name="He S."/>
            <person name="Geng L."/>
            <person name="Zhang X."/>
            <person name="Yang F."/>
            <person name="Yu H."/>
            <person name="Zhan Y."/>
            <person name="Li D."/>
            <person name="Lin Z."/>
            <person name="Wang Y."/>
            <person name="Elmerich C."/>
            <person name="Lin M."/>
            <person name="Jin Q."/>
        </authorList>
    </citation>
    <scope>NUCLEOTIDE SEQUENCE [LARGE SCALE GENOMIC DNA]</scope>
    <source>
        <strain>A1501</strain>
    </source>
</reference>
<proteinExistence type="inferred from homology"/>
<sequence length="356" mass="37772">MAANVLIMAGGTGGHVFPALACAREFQTRGYAVHWLGTPRGIENELVPAAGLPLHLIQVSGLRGKGLASLIKAPLQLVRSLFQARRIIRELRPVCVLGLGGYVTGPGGLAAKLAGVPLVIHEQNAVAGTANRSLVPLASRVCEAFPDTFSSSAKRRTTGNPVREELFLETPRDSLAHRRPRLLVLGGSLGAEPLNKLLPAALAQVPAELRPEVFHQAGKQHAEITEQRYAEAGVEAEVAPFIKDMARAYAWADLVICRAGALTVCELAAAGLPSFLVPLPHAIDDHQTRNAEYLANEGAAVLLPQAKTDAAALAAQLTEVMMQPEKLKAMGTTARRLARPDATRSVVDICLEVAHG</sequence>
<comment type="function">
    <text evidence="1">Cell wall formation. Catalyzes the transfer of a GlcNAc subunit on undecaprenyl-pyrophosphoryl-MurNAc-pentapeptide (lipid intermediate I) to form undecaprenyl-pyrophosphoryl-MurNAc-(pentapeptide)GlcNAc (lipid intermediate II).</text>
</comment>
<comment type="catalytic activity">
    <reaction evidence="1">
        <text>di-trans,octa-cis-undecaprenyl diphospho-N-acetyl-alpha-D-muramoyl-L-alanyl-D-glutamyl-meso-2,6-diaminopimeloyl-D-alanyl-D-alanine + UDP-N-acetyl-alpha-D-glucosamine = di-trans,octa-cis-undecaprenyl diphospho-[N-acetyl-alpha-D-glucosaminyl-(1-&gt;4)]-N-acetyl-alpha-D-muramoyl-L-alanyl-D-glutamyl-meso-2,6-diaminopimeloyl-D-alanyl-D-alanine + UDP + H(+)</text>
        <dbReference type="Rhea" id="RHEA:31227"/>
        <dbReference type="ChEBI" id="CHEBI:15378"/>
        <dbReference type="ChEBI" id="CHEBI:57705"/>
        <dbReference type="ChEBI" id="CHEBI:58223"/>
        <dbReference type="ChEBI" id="CHEBI:61387"/>
        <dbReference type="ChEBI" id="CHEBI:61388"/>
        <dbReference type="EC" id="2.4.1.227"/>
    </reaction>
</comment>
<comment type="pathway">
    <text evidence="1">Cell wall biogenesis; peptidoglycan biosynthesis.</text>
</comment>
<comment type="subcellular location">
    <subcellularLocation>
        <location evidence="1">Cell inner membrane</location>
        <topology evidence="1">Peripheral membrane protein</topology>
        <orientation evidence="1">Cytoplasmic side</orientation>
    </subcellularLocation>
</comment>
<comment type="similarity">
    <text evidence="1">Belongs to the glycosyltransferase 28 family. MurG subfamily.</text>
</comment>
<gene>
    <name evidence="1" type="primary">murG</name>
    <name type="ordered locus">PST_1082</name>
</gene>